<name>MIX17_YEAST</name>
<organism>
    <name type="scientific">Saccharomyces cerevisiae (strain ATCC 204508 / S288c)</name>
    <name type="common">Baker's yeast</name>
    <dbReference type="NCBI Taxonomy" id="559292"/>
    <lineage>
        <taxon>Eukaryota</taxon>
        <taxon>Fungi</taxon>
        <taxon>Dikarya</taxon>
        <taxon>Ascomycota</taxon>
        <taxon>Saccharomycotina</taxon>
        <taxon>Saccharomycetes</taxon>
        <taxon>Saccharomycetales</taxon>
        <taxon>Saccharomycetaceae</taxon>
        <taxon>Saccharomyces</taxon>
    </lineage>
</organism>
<sequence length="156" mass="16669">MARSRGSSRPISRSRPTQTRSASTMAAPVHPQQQQQPNAYSHPPAAGAQTRQPGMFAQMASTAAGVAVGSTIGHTLGAGITGMFSGSGSDSAPVEQQQQNMANTSGQTQTDQQLGRTCEIDARNFTRCLDENNGNFQICDYYLQQLKACQEAARQY</sequence>
<accession>Q03667</accession>
<accession>D6VZH7</accession>
<keyword id="KW-1015">Disulfide bond</keyword>
<keyword id="KW-0496">Mitochondrion</keyword>
<keyword id="KW-1185">Reference proteome</keyword>
<keyword id="KW-0809">Transit peptide</keyword>
<evidence type="ECO:0000250" key="1"/>
<evidence type="ECO:0000255" key="2"/>
<evidence type="ECO:0000255" key="3">
    <source>
        <dbReference type="PROSITE-ProRule" id="PRU01150"/>
    </source>
</evidence>
<evidence type="ECO:0000256" key="4">
    <source>
        <dbReference type="SAM" id="MobiDB-lite"/>
    </source>
</evidence>
<evidence type="ECO:0000269" key="5">
    <source>
    </source>
</evidence>
<evidence type="ECO:0000269" key="6">
    <source>
    </source>
</evidence>
<evidence type="ECO:0000269" key="7">
    <source>
    </source>
</evidence>
<protein>
    <recommendedName>
        <fullName>Mitochondrial intermembrane space cysteine motif-containing protein MIX17</fullName>
    </recommendedName>
    <alternativeName>
        <fullName>Mitochondrial intermembrane space CX(n)C motif protein of 17 kDa</fullName>
    </alternativeName>
</protein>
<feature type="transit peptide" description="Mitochondrion" evidence="2">
    <location>
        <begin position="1"/>
        <end position="21"/>
    </location>
</feature>
<feature type="chain" id="PRO_0000203267" description="Mitochondrial intermembrane space cysteine motif-containing protein MIX17">
    <location>
        <begin position="22"/>
        <end position="156"/>
    </location>
</feature>
<feature type="domain" description="CHCH" evidence="3">
    <location>
        <begin position="115"/>
        <end position="156"/>
    </location>
</feature>
<feature type="region of interest" description="Disordered" evidence="4">
    <location>
        <begin position="1"/>
        <end position="50"/>
    </location>
</feature>
<feature type="region of interest" description="Disordered" evidence="4">
    <location>
        <begin position="78"/>
        <end position="110"/>
    </location>
</feature>
<feature type="short sequence motif" description="Cx9C motif" evidence="3">
    <location>
        <begin position="118"/>
        <end position="128"/>
    </location>
</feature>
<feature type="compositionally biased region" description="Low complexity" evidence="4">
    <location>
        <begin position="1"/>
        <end position="21"/>
    </location>
</feature>
<feature type="compositionally biased region" description="Polar residues" evidence="4">
    <location>
        <begin position="84"/>
        <end position="110"/>
    </location>
</feature>
<feature type="disulfide bond" evidence="1">
    <location>
        <begin position="118"/>
        <end position="149"/>
    </location>
</feature>
<feature type="disulfide bond" evidence="1">
    <location>
        <begin position="128"/>
        <end position="139"/>
    </location>
</feature>
<gene>
    <name type="primary">MIX17</name>
    <name type="synonym">MIC17</name>
    <name type="ordered locus">YMR002W</name>
    <name type="ORF">YM8270.04</name>
</gene>
<dbReference type="EMBL" id="Z48613">
    <property type="protein sequence ID" value="CAA88517.1"/>
    <property type="molecule type" value="Genomic_DNA"/>
</dbReference>
<dbReference type="EMBL" id="AY557766">
    <property type="protein sequence ID" value="AAS56092.1"/>
    <property type="molecule type" value="Genomic_DNA"/>
</dbReference>
<dbReference type="EMBL" id="BK006946">
    <property type="protein sequence ID" value="DAA09901.1"/>
    <property type="molecule type" value="Genomic_DNA"/>
</dbReference>
<dbReference type="PIR" id="S53031">
    <property type="entry name" value="S53031"/>
</dbReference>
<dbReference type="RefSeq" id="NP_013715.1">
    <property type="nucleotide sequence ID" value="NM_001182498.1"/>
</dbReference>
<dbReference type="SMR" id="Q03667"/>
<dbReference type="BioGRID" id="35172">
    <property type="interactions" value="63"/>
</dbReference>
<dbReference type="DIP" id="DIP-2627N"/>
<dbReference type="FunCoup" id="Q03667">
    <property type="interactions" value="305"/>
</dbReference>
<dbReference type="IntAct" id="Q03667">
    <property type="interactions" value="3"/>
</dbReference>
<dbReference type="MINT" id="Q03667"/>
<dbReference type="STRING" id="4932.YMR002W"/>
<dbReference type="iPTMnet" id="Q03667"/>
<dbReference type="PaxDb" id="4932-YMR002W"/>
<dbReference type="PeptideAtlas" id="Q03667"/>
<dbReference type="EnsemblFungi" id="YMR002W_mRNA">
    <property type="protein sequence ID" value="YMR002W"/>
    <property type="gene ID" value="YMR002W"/>
</dbReference>
<dbReference type="GeneID" id="855014"/>
<dbReference type="KEGG" id="sce:YMR002W"/>
<dbReference type="AGR" id="SGD:S000004604"/>
<dbReference type="SGD" id="S000004604">
    <property type="gene designation" value="MIX17"/>
</dbReference>
<dbReference type="VEuPathDB" id="FungiDB:YMR002W"/>
<dbReference type="eggNOG" id="KOG4090">
    <property type="taxonomic scope" value="Eukaryota"/>
</dbReference>
<dbReference type="GeneTree" id="ENSGT00940000172340"/>
<dbReference type="HOGENOM" id="CLU_093520_0_1_1"/>
<dbReference type="InParanoid" id="Q03667"/>
<dbReference type="OMA" id="CDADARN"/>
<dbReference type="OrthoDB" id="1106148at2759"/>
<dbReference type="BioCyc" id="YEAST:G3O-32713-MONOMER"/>
<dbReference type="BioGRID-ORCS" id="855014">
    <property type="hits" value="7 hits in 10 CRISPR screens"/>
</dbReference>
<dbReference type="PRO" id="PR:Q03667"/>
<dbReference type="Proteomes" id="UP000002311">
    <property type="component" value="Chromosome XIII"/>
</dbReference>
<dbReference type="RNAct" id="Q03667">
    <property type="molecule type" value="protein"/>
</dbReference>
<dbReference type="GO" id="GO:0005737">
    <property type="term" value="C:cytoplasm"/>
    <property type="evidence" value="ECO:0007005"/>
    <property type="project" value="SGD"/>
</dbReference>
<dbReference type="GO" id="GO:0005758">
    <property type="term" value="C:mitochondrial intermembrane space"/>
    <property type="evidence" value="ECO:0000314"/>
    <property type="project" value="SGD"/>
</dbReference>
<dbReference type="GO" id="GO:0005739">
    <property type="term" value="C:mitochondrion"/>
    <property type="evidence" value="ECO:0007005"/>
    <property type="project" value="SGD"/>
</dbReference>
<dbReference type="GO" id="GO:0005634">
    <property type="term" value="C:nucleus"/>
    <property type="evidence" value="ECO:0007005"/>
    <property type="project" value="SGD"/>
</dbReference>
<dbReference type="GO" id="GO:0009060">
    <property type="term" value="P:aerobic respiration"/>
    <property type="evidence" value="ECO:0000315"/>
    <property type="project" value="SGD"/>
</dbReference>
<dbReference type="GO" id="GO:0007005">
    <property type="term" value="P:mitochondrion organization"/>
    <property type="evidence" value="ECO:0000318"/>
    <property type="project" value="GO_Central"/>
</dbReference>
<dbReference type="InterPro" id="IPR055304">
    <property type="entry name" value="CHCHD2/10-like"/>
</dbReference>
<dbReference type="PANTHER" id="PTHR13523:SF2">
    <property type="entry name" value="COILED-COIL-HELIX-COILED-COIL-HELIX DOMAIN CONTAINING 2, ISOFORM A-RELATED"/>
    <property type="match status" value="1"/>
</dbReference>
<dbReference type="PANTHER" id="PTHR13523">
    <property type="entry name" value="COILED-COIL-HELIX-COILED-COIL-HELIX DOMAIN CONTAINING 2/NUR77"/>
    <property type="match status" value="1"/>
</dbReference>
<proteinExistence type="evidence at protein level"/>
<reference key="1">
    <citation type="journal article" date="1997" name="Nature">
        <title>The nucleotide sequence of Saccharomyces cerevisiae chromosome XIII.</title>
        <authorList>
            <person name="Bowman S."/>
            <person name="Churcher C.M."/>
            <person name="Badcock K."/>
            <person name="Brown D."/>
            <person name="Chillingworth T."/>
            <person name="Connor R."/>
            <person name="Dedman K."/>
            <person name="Devlin K."/>
            <person name="Gentles S."/>
            <person name="Hamlin N."/>
            <person name="Hunt S."/>
            <person name="Jagels K."/>
            <person name="Lye G."/>
            <person name="Moule S."/>
            <person name="Odell C."/>
            <person name="Pearson D."/>
            <person name="Rajandream M.A."/>
            <person name="Rice P."/>
            <person name="Skelton J."/>
            <person name="Walsh S.V."/>
            <person name="Whitehead S."/>
            <person name="Barrell B.G."/>
        </authorList>
    </citation>
    <scope>NUCLEOTIDE SEQUENCE [LARGE SCALE GENOMIC DNA]</scope>
    <source>
        <strain>ATCC 204508 / S288c</strain>
    </source>
</reference>
<reference key="2">
    <citation type="journal article" date="2014" name="G3 (Bethesda)">
        <title>The reference genome sequence of Saccharomyces cerevisiae: Then and now.</title>
        <authorList>
            <person name="Engel S.R."/>
            <person name="Dietrich F.S."/>
            <person name="Fisk D.G."/>
            <person name="Binkley G."/>
            <person name="Balakrishnan R."/>
            <person name="Costanzo M.C."/>
            <person name="Dwight S.S."/>
            <person name="Hitz B.C."/>
            <person name="Karra K."/>
            <person name="Nash R.S."/>
            <person name="Weng S."/>
            <person name="Wong E.D."/>
            <person name="Lloyd P."/>
            <person name="Skrzypek M.S."/>
            <person name="Miyasato S.R."/>
            <person name="Simison M."/>
            <person name="Cherry J.M."/>
        </authorList>
    </citation>
    <scope>GENOME REANNOTATION</scope>
    <source>
        <strain>ATCC 204508 / S288c</strain>
    </source>
</reference>
<reference key="3">
    <citation type="journal article" date="2007" name="Genome Res.">
        <title>Approaching a complete repository of sequence-verified protein-encoding clones for Saccharomyces cerevisiae.</title>
        <authorList>
            <person name="Hu Y."/>
            <person name="Rolfs A."/>
            <person name="Bhullar B."/>
            <person name="Murthy T.V.S."/>
            <person name="Zhu C."/>
            <person name="Berger M.F."/>
            <person name="Camargo A.A."/>
            <person name="Kelley F."/>
            <person name="McCarron S."/>
            <person name="Jepson D."/>
            <person name="Richardson A."/>
            <person name="Raphael J."/>
            <person name="Moreira D."/>
            <person name="Taycher E."/>
            <person name="Zuo D."/>
            <person name="Mohr S."/>
            <person name="Kane M.F."/>
            <person name="Williamson J."/>
            <person name="Simpson A.J.G."/>
            <person name="Bulyk M.L."/>
            <person name="Harlow E."/>
            <person name="Marsischky G."/>
            <person name="Kolodner R.D."/>
            <person name="LaBaer J."/>
        </authorList>
    </citation>
    <scope>NUCLEOTIDE SEQUENCE [GENOMIC DNA]</scope>
    <source>
        <strain>ATCC 204508 / S288c</strain>
    </source>
</reference>
<reference key="4">
    <citation type="journal article" date="2003" name="Nature">
        <title>Global analysis of protein expression in yeast.</title>
        <authorList>
            <person name="Ghaemmaghami S."/>
            <person name="Huh W.-K."/>
            <person name="Bower K."/>
            <person name="Howson R.W."/>
            <person name="Belle A."/>
            <person name="Dephoure N."/>
            <person name="O'Shea E.K."/>
            <person name="Weissman J.S."/>
        </authorList>
    </citation>
    <scope>LEVEL OF PROTEIN EXPRESSION [LARGE SCALE ANALYSIS]</scope>
</reference>
<reference key="5">
    <citation type="journal article" date="2007" name="J. Mol. Biol.">
        <title>Novel mitochondrial intermembrane space proteins as substrates of the MIA import pathway.</title>
        <authorList>
            <person name="Gabriel K."/>
            <person name="Milenkovic D."/>
            <person name="Chacinska A."/>
            <person name="Mueller J."/>
            <person name="Guiard B."/>
            <person name="Pfanner N."/>
            <person name="Meisinger C."/>
        </authorList>
    </citation>
    <scope>SUBCELLULAR LOCATION</scope>
</reference>
<reference key="6">
    <citation type="journal article" date="2012" name="Mol. Cell. Proteomics">
        <title>Intermembrane space proteome of yeast mitochondria.</title>
        <authorList>
            <person name="Voegtle F.N."/>
            <person name="Burkhart J.M."/>
            <person name="Rao S."/>
            <person name="Gerbeth C."/>
            <person name="Hinrichs J."/>
            <person name="Martinou J.C."/>
            <person name="Chacinska A."/>
            <person name="Sickmann A."/>
            <person name="Zahedi R.P."/>
            <person name="Meisinger C."/>
        </authorList>
    </citation>
    <scope>IDENTIFICATION BY MASS SPECTROMETRY</scope>
    <scope>SUBCELLULAR LOCATION [LARGE SCALE ANALYSIS]</scope>
</reference>
<reference key="7">
    <citation type="journal article" date="2014" name="J. Cell Biol.">
        <title>Uniform nomenclature for the mitochondrial contact site and cristae organizing system.</title>
        <authorList>
            <person name="Pfanner N."/>
            <person name="van der Laan M."/>
            <person name="Amati P."/>
            <person name="Capaldi R.A."/>
            <person name="Caudy A.A."/>
            <person name="Chacinska A."/>
            <person name="Darshi M."/>
            <person name="Deckers M."/>
            <person name="Hoppins S."/>
            <person name="Icho T."/>
            <person name="Jakobs S."/>
            <person name="Ji J."/>
            <person name="Kozjak-Pavlovic V."/>
            <person name="Meisinger C."/>
            <person name="Odgren P.R."/>
            <person name="Park S.K."/>
            <person name="Rehling P."/>
            <person name="Reichert A.S."/>
            <person name="Sheikh M.S."/>
            <person name="Taylor S.S."/>
            <person name="Tsuchida N."/>
            <person name="van der Bliek A.M."/>
            <person name="van der Klei I.J."/>
            <person name="Weissman J.S."/>
            <person name="Westermann B."/>
            <person name="Zha J."/>
            <person name="Neupert W."/>
            <person name="Nunnari J."/>
        </authorList>
    </citation>
    <scope>GENE NAME</scope>
</reference>
<comment type="subcellular location">
    <subcellularLocation>
        <location evidence="6 7">Mitochondrion intermembrane space</location>
    </subcellularLocation>
    <text>Imported into mitochondrion intermembrane space through the MIA pathway.</text>
</comment>
<comment type="miscellaneous">
    <text evidence="5">Present with 6960 molecules/cell in log phase SD medium.</text>
</comment>